<organism>
    <name type="scientific">Macaca nemestrina</name>
    <name type="common">Pig-tailed macaque</name>
    <dbReference type="NCBI Taxonomy" id="9545"/>
    <lineage>
        <taxon>Eukaryota</taxon>
        <taxon>Metazoa</taxon>
        <taxon>Chordata</taxon>
        <taxon>Craniata</taxon>
        <taxon>Vertebrata</taxon>
        <taxon>Euteleostomi</taxon>
        <taxon>Mammalia</taxon>
        <taxon>Eutheria</taxon>
        <taxon>Euarchontoglires</taxon>
        <taxon>Primates</taxon>
        <taxon>Haplorrhini</taxon>
        <taxon>Catarrhini</taxon>
        <taxon>Cercopithecidae</taxon>
        <taxon>Cercopithecinae</taxon>
        <taxon>Macaca</taxon>
    </lineage>
</organism>
<dbReference type="EC" id="2.3.2.27"/>
<dbReference type="EMBL" id="AY899893">
    <property type="protein sequence ID" value="AAX86683.1"/>
    <property type="molecule type" value="Genomic_DNA"/>
</dbReference>
<dbReference type="EMBL" id="AY899887">
    <property type="protein sequence ID" value="AAX86683.1"/>
    <property type="status" value="JOINED"/>
    <property type="molecule type" value="Genomic_DNA"/>
</dbReference>
<dbReference type="EMBL" id="AY899888">
    <property type="protein sequence ID" value="AAX86683.1"/>
    <property type="status" value="JOINED"/>
    <property type="molecule type" value="Genomic_DNA"/>
</dbReference>
<dbReference type="EMBL" id="AY899889">
    <property type="protein sequence ID" value="AAX86683.1"/>
    <property type="status" value="JOINED"/>
    <property type="molecule type" value="Genomic_DNA"/>
</dbReference>
<dbReference type="EMBL" id="AY899890">
    <property type="protein sequence ID" value="AAX86683.1"/>
    <property type="status" value="JOINED"/>
    <property type="molecule type" value="Genomic_DNA"/>
</dbReference>
<dbReference type="EMBL" id="AY899891">
    <property type="protein sequence ID" value="AAX86683.1"/>
    <property type="status" value="JOINED"/>
    <property type="molecule type" value="Genomic_DNA"/>
</dbReference>
<dbReference type="EMBL" id="AY899892">
    <property type="protein sequence ID" value="AAX86683.1"/>
    <property type="status" value="JOINED"/>
    <property type="molecule type" value="Genomic_DNA"/>
</dbReference>
<dbReference type="EMBL" id="DQ437602">
    <property type="protein sequence ID" value="ABE28404.1"/>
    <property type="molecule type" value="Genomic_DNA"/>
</dbReference>
<dbReference type="SMR" id="Q2YEN0"/>
<dbReference type="STRING" id="9545.ENSMNEP00000011110"/>
<dbReference type="UniPathway" id="UPA00143"/>
<dbReference type="Proteomes" id="UP000233120">
    <property type="component" value="Unassembled WGS sequence"/>
</dbReference>
<dbReference type="GO" id="GO:0005634">
    <property type="term" value="C:nucleus"/>
    <property type="evidence" value="ECO:0007669"/>
    <property type="project" value="UniProtKB-SubCell"/>
</dbReference>
<dbReference type="GO" id="GO:0000932">
    <property type="term" value="C:P-body"/>
    <property type="evidence" value="ECO:0000250"/>
    <property type="project" value="UniProtKB"/>
</dbReference>
<dbReference type="GO" id="GO:0038187">
    <property type="term" value="F:pattern recognition receptor activity"/>
    <property type="evidence" value="ECO:0000250"/>
    <property type="project" value="UniProtKB"/>
</dbReference>
<dbReference type="GO" id="GO:0004842">
    <property type="term" value="F:ubiquitin-protein transferase activity"/>
    <property type="evidence" value="ECO:0000250"/>
    <property type="project" value="UniProtKB"/>
</dbReference>
<dbReference type="GO" id="GO:0008270">
    <property type="term" value="F:zinc ion binding"/>
    <property type="evidence" value="ECO:0007669"/>
    <property type="project" value="UniProtKB-KW"/>
</dbReference>
<dbReference type="GO" id="GO:0002218">
    <property type="term" value="P:activation of innate immune response"/>
    <property type="evidence" value="ECO:0000250"/>
    <property type="project" value="UniProtKB"/>
</dbReference>
<dbReference type="GO" id="GO:0006914">
    <property type="term" value="P:autophagy"/>
    <property type="evidence" value="ECO:0007669"/>
    <property type="project" value="UniProtKB-KW"/>
</dbReference>
<dbReference type="GO" id="GO:0051607">
    <property type="term" value="P:defense response to virus"/>
    <property type="evidence" value="ECO:0007669"/>
    <property type="project" value="UniProtKB-KW"/>
</dbReference>
<dbReference type="GO" id="GO:0045087">
    <property type="term" value="P:innate immune response"/>
    <property type="evidence" value="ECO:0007669"/>
    <property type="project" value="UniProtKB-KW"/>
</dbReference>
<dbReference type="GO" id="GO:0043123">
    <property type="term" value="P:positive regulation of canonical NF-kappaB signal transduction"/>
    <property type="evidence" value="ECO:0000250"/>
    <property type="project" value="UniProtKB"/>
</dbReference>
<dbReference type="GO" id="GO:0043410">
    <property type="term" value="P:positive regulation of MAPK cascade"/>
    <property type="evidence" value="ECO:0000250"/>
    <property type="project" value="UniProtKB"/>
</dbReference>
<dbReference type="GO" id="GO:0051092">
    <property type="term" value="P:positive regulation of NF-kappaB transcription factor activity"/>
    <property type="evidence" value="ECO:0000250"/>
    <property type="project" value="UniProtKB"/>
</dbReference>
<dbReference type="GO" id="GO:0070534">
    <property type="term" value="P:protein K63-linked ubiquitination"/>
    <property type="evidence" value="ECO:0000250"/>
    <property type="project" value="UniProtKB"/>
</dbReference>
<dbReference type="GO" id="GO:0031664">
    <property type="term" value="P:regulation of lipopolysaccharide-mediated signaling pathway"/>
    <property type="evidence" value="ECO:0000250"/>
    <property type="project" value="UniProtKB"/>
</dbReference>
<dbReference type="CDD" id="cd19761">
    <property type="entry name" value="Bbox2_TRIM5-like"/>
    <property type="match status" value="1"/>
</dbReference>
<dbReference type="CDD" id="cd16591">
    <property type="entry name" value="RING-HC_TRIM5-like_C-IV"/>
    <property type="match status" value="1"/>
</dbReference>
<dbReference type="CDD" id="cd15822">
    <property type="entry name" value="SPRY_PRY_TRIM5"/>
    <property type="match status" value="1"/>
</dbReference>
<dbReference type="FunFam" id="2.60.120.920:FF:000023">
    <property type="entry name" value="Tripartite motif-containing 5 (Predicted)"/>
    <property type="match status" value="1"/>
</dbReference>
<dbReference type="FunFam" id="3.30.160.60:FF:000386">
    <property type="entry name" value="Tripartite motif-containing 5 (Predicted)"/>
    <property type="match status" value="1"/>
</dbReference>
<dbReference type="FunFam" id="3.30.40.10:FF:000144">
    <property type="entry name" value="Tripartite motif-containing 5 (Predicted)"/>
    <property type="match status" value="1"/>
</dbReference>
<dbReference type="Gene3D" id="2.60.120.920">
    <property type="match status" value="1"/>
</dbReference>
<dbReference type="Gene3D" id="3.30.160.60">
    <property type="entry name" value="Classic Zinc Finger"/>
    <property type="match status" value="1"/>
</dbReference>
<dbReference type="Gene3D" id="3.30.40.10">
    <property type="entry name" value="Zinc/RING finger domain, C3HC4 (zinc finger)"/>
    <property type="match status" value="1"/>
</dbReference>
<dbReference type="InterPro" id="IPR001870">
    <property type="entry name" value="B30.2/SPRY"/>
</dbReference>
<dbReference type="InterPro" id="IPR043136">
    <property type="entry name" value="B30.2/SPRY_sf"/>
</dbReference>
<dbReference type="InterPro" id="IPR003879">
    <property type="entry name" value="Butyrophylin_SPRY"/>
</dbReference>
<dbReference type="InterPro" id="IPR013320">
    <property type="entry name" value="ConA-like_dom_sf"/>
</dbReference>
<dbReference type="InterPro" id="IPR003877">
    <property type="entry name" value="SPRY_dom"/>
</dbReference>
<dbReference type="InterPro" id="IPR050143">
    <property type="entry name" value="TRIM/RBCC"/>
</dbReference>
<dbReference type="InterPro" id="IPR027370">
    <property type="entry name" value="Znf-RING_euk"/>
</dbReference>
<dbReference type="InterPro" id="IPR000315">
    <property type="entry name" value="Znf_B-box"/>
</dbReference>
<dbReference type="InterPro" id="IPR001841">
    <property type="entry name" value="Znf_RING"/>
</dbReference>
<dbReference type="InterPro" id="IPR013083">
    <property type="entry name" value="Znf_RING/FYVE/PHD"/>
</dbReference>
<dbReference type="InterPro" id="IPR017907">
    <property type="entry name" value="Znf_RING_CS"/>
</dbReference>
<dbReference type="PANTHER" id="PTHR24103">
    <property type="entry name" value="E3 UBIQUITIN-PROTEIN LIGASE TRIM"/>
    <property type="match status" value="1"/>
</dbReference>
<dbReference type="Pfam" id="PF00622">
    <property type="entry name" value="SPRY"/>
    <property type="match status" value="1"/>
</dbReference>
<dbReference type="Pfam" id="PF00643">
    <property type="entry name" value="zf-B_box"/>
    <property type="match status" value="1"/>
</dbReference>
<dbReference type="Pfam" id="PF13445">
    <property type="entry name" value="zf-RING_UBOX"/>
    <property type="match status" value="1"/>
</dbReference>
<dbReference type="PRINTS" id="PR01407">
    <property type="entry name" value="BUTYPHLNCDUF"/>
</dbReference>
<dbReference type="SMART" id="SM00336">
    <property type="entry name" value="BBOX"/>
    <property type="match status" value="1"/>
</dbReference>
<dbReference type="SMART" id="SM00184">
    <property type="entry name" value="RING"/>
    <property type="match status" value="1"/>
</dbReference>
<dbReference type="SMART" id="SM00449">
    <property type="entry name" value="SPRY"/>
    <property type="match status" value="1"/>
</dbReference>
<dbReference type="SUPFAM" id="SSF57845">
    <property type="entry name" value="B-box zinc-binding domain"/>
    <property type="match status" value="1"/>
</dbReference>
<dbReference type="SUPFAM" id="SSF49899">
    <property type="entry name" value="Concanavalin A-like lectins/glucanases"/>
    <property type="match status" value="1"/>
</dbReference>
<dbReference type="SUPFAM" id="SSF57850">
    <property type="entry name" value="RING/U-box"/>
    <property type="match status" value="1"/>
</dbReference>
<dbReference type="PROSITE" id="PS50188">
    <property type="entry name" value="B302_SPRY"/>
    <property type="match status" value="1"/>
</dbReference>
<dbReference type="PROSITE" id="PS50119">
    <property type="entry name" value="ZF_BBOX"/>
    <property type="match status" value="1"/>
</dbReference>
<dbReference type="PROSITE" id="PS00518">
    <property type="entry name" value="ZF_RING_1"/>
    <property type="match status" value="1"/>
</dbReference>
<dbReference type="PROSITE" id="PS50089">
    <property type="entry name" value="ZF_RING_2"/>
    <property type="match status" value="1"/>
</dbReference>
<accession>Q2YEN0</accession>
<accession>Q0NNX8</accession>
<proteinExistence type="inferred from homology"/>
<protein>
    <recommendedName>
        <fullName>Tripartite motif-containing protein 5</fullName>
        <ecNumber>2.3.2.27</ecNumber>
    </recommendedName>
    <alternativeName>
        <fullName evidence="8">RING-type E3 ubiquitin transferase TRIM5</fullName>
    </alternativeName>
    <alternativeName>
        <fullName>TRIM5alpha</fullName>
    </alternativeName>
</protein>
<evidence type="ECO:0000250" key="1"/>
<evidence type="ECO:0000250" key="2">
    <source>
        <dbReference type="UniProtKB" id="Q0PF16"/>
    </source>
</evidence>
<evidence type="ECO:0000250" key="3">
    <source>
        <dbReference type="UniProtKB" id="Q9C035"/>
    </source>
</evidence>
<evidence type="ECO:0000255" key="4"/>
<evidence type="ECO:0000255" key="5">
    <source>
        <dbReference type="PROSITE-ProRule" id="PRU00024"/>
    </source>
</evidence>
<evidence type="ECO:0000255" key="6">
    <source>
        <dbReference type="PROSITE-ProRule" id="PRU00175"/>
    </source>
</evidence>
<evidence type="ECO:0000255" key="7">
    <source>
        <dbReference type="PROSITE-ProRule" id="PRU00548"/>
    </source>
</evidence>
<evidence type="ECO:0000305" key="8"/>
<sequence>MASGILLNVKEEVTCPICLELLTEPLSLHCGHSFCQACITANHKKSMLYKEGERSCPVCRISYQPENIQPNRHVANIVEKLREVKLSPEEGQKVDHCARHGEKLLLFCQEDSKVICWLCERSQEHRGHHTFLMEEVAQEYHVKLQTALEMLRQKQQEAEKLEADIREEKASWKIQIDHDKTNVLADFEQLREILDREESNELQNLEKEEEDILKSLTKSETKMVQQTQYVRELISDLEHRLQGSMMELLQGVDGIIKRIENMTLKKPKTFHKNQRRVFRAPDLKGMLDMFRELTDVRRCWVDVTLAPNNISHVVIAEDKRQVSSRNPQIMYRTQGTLFQSLTNFIYCTGILGSQSITSGKHYWEVDVSKKSAWILGVCAGFQPDAMYNIEQNENYQPKYGYWVIGLQEGVKYSVFQDGSSHTPFAPFIVPLSVIICPDRVGVFVDYEACTVSFFNITNHGFLIYKFSQCSFSKPVFPYLNPRKCTVPMTLCSPSS</sequence>
<name>TRIM5_MACNE</name>
<feature type="initiator methionine" description="Removed" evidence="3">
    <location>
        <position position="1"/>
    </location>
</feature>
<feature type="chain" id="PRO_0000273466" description="Tripartite motif-containing protein 5">
    <location>
        <begin position="2"/>
        <end position="495"/>
    </location>
</feature>
<feature type="domain" description="B30.2/SPRY" evidence="7">
    <location>
        <begin position="283"/>
        <end position="495"/>
    </location>
</feature>
<feature type="zinc finger region" description="RING-type" evidence="6">
    <location>
        <begin position="15"/>
        <end position="60"/>
    </location>
</feature>
<feature type="zinc finger region" description="B box-type" evidence="5">
    <location>
        <begin position="92"/>
        <end position="133"/>
    </location>
</feature>
<feature type="region of interest" description="Required for interaction with GABARAP and for autophagy" evidence="2">
    <location>
        <begin position="187"/>
        <end position="200"/>
    </location>
</feature>
<feature type="coiled-coil region" evidence="4">
    <location>
        <begin position="137"/>
        <end position="223"/>
    </location>
</feature>
<feature type="binding site" evidence="5">
    <location>
        <position position="97"/>
    </location>
    <ligand>
        <name>Zn(2+)</name>
        <dbReference type="ChEBI" id="CHEBI:29105"/>
    </ligand>
</feature>
<feature type="binding site" evidence="5">
    <location>
        <position position="100"/>
    </location>
    <ligand>
        <name>Zn(2+)</name>
        <dbReference type="ChEBI" id="CHEBI:29105"/>
    </ligand>
</feature>
<feature type="binding site" evidence="5">
    <location>
        <position position="119"/>
    </location>
    <ligand>
        <name>Zn(2+)</name>
        <dbReference type="ChEBI" id="CHEBI:29105"/>
    </ligand>
</feature>
<feature type="binding site" evidence="5">
    <location>
        <position position="125"/>
    </location>
    <ligand>
        <name>Zn(2+)</name>
        <dbReference type="ChEBI" id="CHEBI:29105"/>
    </ligand>
</feature>
<feature type="modified residue" description="N-acetylalanine" evidence="3">
    <location>
        <position position="2"/>
    </location>
</feature>
<feature type="modified residue" description="Phosphoserine" evidence="3">
    <location>
        <position position="87"/>
    </location>
</feature>
<feature type="sequence conflict" description="In Ref. 2; ABE28404." evidence="8" ref="2">
    <original>I</original>
    <variation>V</variation>
    <location>
        <position position="350"/>
    </location>
</feature>
<comment type="function">
    <text evidence="3">Capsid-specific restriction factor that prevents infection from non-host-adapted retroviruses. Blocks viral replication early in the life cycle, after viral entry but before reverse transcription. In addition to acting as a capsid-specific restriction factor, also acts as a pattern recognition receptor that activates innate immune signaling in response to the retroviral capsid lattice. Binding to the viral capsid triggers its E3 ubiquitin ligase activity, and in concert with the heterodimeric ubiquitin conjugating enzyme complex UBE2V1-UBE2N (also known as UBC13-UEV1A complex) generates 'Lys-63'-linked polyubiquitin chains, which in turn are catalysts in the autophosphorylation of the MAP3K7/TAK1 complex (includes TAK1, TAB2, and TAB3). Activation of the MAP3K7/TAK1 complex by autophosphorylation results in the induction and expression of NF-kappa-B and MAPK-responsive inflammatory genes, thereby leading to an innate immune response in the infected cell. Plays a role in regulating autophagy through activation of autophagy regulator BECN1 by causing its dissociation from its inhibitors BCL2 and TAB2.</text>
</comment>
<comment type="catalytic activity">
    <reaction>
        <text>S-ubiquitinyl-[E2 ubiquitin-conjugating enzyme]-L-cysteine + [acceptor protein]-L-lysine = [E2 ubiquitin-conjugating enzyme]-L-cysteine + N(6)-ubiquitinyl-[acceptor protein]-L-lysine.</text>
        <dbReference type="EC" id="2.3.2.27"/>
    </reaction>
</comment>
<comment type="pathway">
    <text>Protein modification; protein ubiquitination.</text>
</comment>
<comment type="subunit">
    <text evidence="2 3">Can form homodimers and homotrimers. In addition to lower-order dimerization, also exhibits a higher-order multimerization and both low- and high-order multimerizations are essential for its restriction activity. Interacts with BTBD1 and BTBD2. Interacts with PSMC4, PSMC5, PSMD7 and HSPA8/HSC70. Interacts (via B30.2/SPRY domain) with HSPA1A/B. Interacts with PSMC2, MAP3K7/TAK1, TAB2 and TAB3. Interacts with SQSTM1. Interacts with TRIM6 and TRIM34. Interacts with ULK1 (phosphorylated form), GABARAP, GABARAPL1, GABARAPL2, MAP1LC3A, MAP1LC3C and BECN1.</text>
</comment>
<comment type="subcellular location">
    <subcellularLocation>
        <location evidence="2">Cytoplasm</location>
    </subcellularLocation>
    <subcellularLocation>
        <location evidence="2">Nucleus</location>
    </subcellularLocation>
    <text evidence="2">Predominantly localizes in cytoplasmic bodies. Localization may be influenced by the coexpression of other TRIM proteins, hence partial nuclear localization is observed in the presence of TRIM22 or TRIM27. In cytoplasmic bodies, colocalizes with proteasomal subunits and SQSTM1.</text>
</comment>
<comment type="domain">
    <text evidence="2 3">The B box-type zinc finger domain and the coiled-coil domain contribute to the higher and low order multimerization respectively which is essential for restriction activity. The coiled coil domain is important for higher order multimerization by promoting the initial dimerization.</text>
</comment>
<comment type="domain">
    <text evidence="1">The B30.2/SPRY domain acts as a capsid recognition domain. Polymorphisms in this domain explain the observed species-specific differences among orthologs (By similarity).</text>
</comment>
<comment type="domain">
    <text evidence="1">The RING-type zinc finger domain confers E3 ubiquitin ligase activity and is essential for retrovirus restriction activity, autoubiquitination and higher-order multimerization.</text>
</comment>
<comment type="PTM">
    <text evidence="1">Degraded in a proteasome-independent fashion in the absence of viral infection but in a proteasome-dependent fashion following exposure to restriction sensitive virus.</text>
</comment>
<comment type="PTM">
    <text evidence="1">Autoubiquitinated in a RING finger- and UBE2D2-dependent manner. Monoubiquitinated by TRIM21. Deubiquitinated by Yersinia YopJ. Ubiquitination may not lead to proteasomal degradation (By similarity).</text>
</comment>
<comment type="similarity">
    <text evidence="8">Belongs to the TRIM/RBCC family.</text>
</comment>
<reference key="1">
    <citation type="journal article" date="2005" name="Gene">
        <title>Adaptive evolution of primate TRIM5alpha, a gene restricting HIV-1 infection.</title>
        <authorList>
            <person name="Liu H.L."/>
            <person name="Wang Y.Q."/>
            <person name="Liao C.H."/>
            <person name="Kuang Y.Q."/>
            <person name="Zheng Y.T."/>
            <person name="Su B."/>
        </authorList>
    </citation>
    <scope>NUCLEOTIDE SEQUENCE [GENOMIC DNA]</scope>
</reference>
<reference key="2">
    <citation type="journal article" date="2006" name="J. Virol.">
        <title>All three variable regions of the TRIM5alpha B30.2 domain can contribute to the specificity of retrovirus restriction.</title>
        <authorList>
            <person name="Ohkura S."/>
            <person name="Yap M.W."/>
            <person name="Sheldon T."/>
            <person name="Stoye J.P."/>
        </authorList>
    </citation>
    <scope>NUCLEOTIDE SEQUENCE [GENOMIC DNA] OF 302-495</scope>
</reference>
<keyword id="KW-0007">Acetylation</keyword>
<keyword id="KW-0051">Antiviral defense</keyword>
<keyword id="KW-0072">Autophagy</keyword>
<keyword id="KW-0175">Coiled coil</keyword>
<keyword id="KW-0963">Cytoplasm</keyword>
<keyword id="KW-0391">Immunity</keyword>
<keyword id="KW-0399">Innate immunity</keyword>
<keyword id="KW-0479">Metal-binding</keyword>
<keyword id="KW-0539">Nucleus</keyword>
<keyword id="KW-0597">Phosphoprotein</keyword>
<keyword id="KW-1185">Reference proteome</keyword>
<keyword id="KW-0808">Transferase</keyword>
<keyword id="KW-0832">Ubl conjugation</keyword>
<keyword id="KW-0833">Ubl conjugation pathway</keyword>
<keyword id="KW-0862">Zinc</keyword>
<keyword id="KW-0863">Zinc-finger</keyword>
<gene>
    <name type="primary">TRIM5</name>
</gene>